<organism>
    <name type="scientific">Staphylococcus aureus (strain USA300)</name>
    <dbReference type="NCBI Taxonomy" id="367830"/>
    <lineage>
        <taxon>Bacteria</taxon>
        <taxon>Bacillati</taxon>
        <taxon>Bacillota</taxon>
        <taxon>Bacilli</taxon>
        <taxon>Bacillales</taxon>
        <taxon>Staphylococcaceae</taxon>
        <taxon>Staphylococcus</taxon>
    </lineage>
</organism>
<sequence>MRTPIIAGNWKMNKTVQEAKDFVNALPTLPDSKEVESVICAPAIQLDALTTAVKEGKAQGLEIGAQNTYFEDNGAFTGETSPVALADLGVKYVVIGHSERRELFHETDEEINKKAHAIFKHGMTPIICVGETDEERESGKANDVVGEQVKKAVAGLSEDQLKSVVIAYEPIWAIGTGKSSTSEDANEMCAFVRQTIADLSSKEVSEATRIQYGGSVKPNNIKEYMAQTDIDGALVGGASLKVEDFVQLLEGAK</sequence>
<feature type="chain" id="PRO_0000307568" description="Triosephosphate isomerase">
    <location>
        <begin position="1"/>
        <end position="253"/>
    </location>
</feature>
<feature type="active site" description="Electrophile" evidence="1">
    <location>
        <position position="97"/>
    </location>
</feature>
<feature type="active site" description="Proton acceptor" evidence="1">
    <location>
        <position position="169"/>
    </location>
</feature>
<feature type="binding site" evidence="1">
    <location>
        <begin position="9"/>
        <end position="11"/>
    </location>
    <ligand>
        <name>substrate</name>
    </ligand>
</feature>
<feature type="binding site" evidence="1">
    <location>
        <position position="175"/>
    </location>
    <ligand>
        <name>substrate</name>
    </ligand>
</feature>
<feature type="binding site" evidence="1">
    <location>
        <position position="215"/>
    </location>
    <ligand>
        <name>substrate</name>
    </ligand>
</feature>
<feature type="binding site" evidence="1">
    <location>
        <begin position="236"/>
        <end position="237"/>
    </location>
    <ligand>
        <name>substrate</name>
    </ligand>
</feature>
<proteinExistence type="inferred from homology"/>
<evidence type="ECO:0000255" key="1">
    <source>
        <dbReference type="HAMAP-Rule" id="MF_00147"/>
    </source>
</evidence>
<protein>
    <recommendedName>
        <fullName evidence="1">Triosephosphate isomerase</fullName>
        <shortName evidence="1">TIM</shortName>
        <shortName evidence="1">TPI</shortName>
        <ecNumber evidence="1">5.3.1.1</ecNumber>
    </recommendedName>
    <alternativeName>
        <fullName evidence="1">Triose-phosphate isomerase</fullName>
    </alternativeName>
</protein>
<reference key="1">
    <citation type="journal article" date="2006" name="Lancet">
        <title>Complete genome sequence of USA300, an epidemic clone of community-acquired meticillin-resistant Staphylococcus aureus.</title>
        <authorList>
            <person name="Diep B.A."/>
            <person name="Gill S.R."/>
            <person name="Chang R.F."/>
            <person name="Phan T.H."/>
            <person name="Chen J.H."/>
            <person name="Davidson M.G."/>
            <person name="Lin F."/>
            <person name="Lin J."/>
            <person name="Carleton H.A."/>
            <person name="Mongodin E.F."/>
            <person name="Sensabaugh G.F."/>
            <person name="Perdreau-Remington F."/>
        </authorList>
    </citation>
    <scope>NUCLEOTIDE SEQUENCE [LARGE SCALE GENOMIC DNA]</scope>
    <source>
        <strain>USA300</strain>
    </source>
</reference>
<comment type="function">
    <text evidence="1">Involved in the gluconeogenesis. Catalyzes stereospecifically the conversion of dihydroxyacetone phosphate (DHAP) to D-glyceraldehyde-3-phosphate (G3P).</text>
</comment>
<comment type="catalytic activity">
    <reaction evidence="1">
        <text>D-glyceraldehyde 3-phosphate = dihydroxyacetone phosphate</text>
        <dbReference type="Rhea" id="RHEA:18585"/>
        <dbReference type="ChEBI" id="CHEBI:57642"/>
        <dbReference type="ChEBI" id="CHEBI:59776"/>
        <dbReference type="EC" id="5.3.1.1"/>
    </reaction>
</comment>
<comment type="pathway">
    <text evidence="1">Carbohydrate biosynthesis; gluconeogenesis.</text>
</comment>
<comment type="pathway">
    <text evidence="1">Carbohydrate degradation; glycolysis; D-glyceraldehyde 3-phosphate from glycerone phosphate: step 1/1.</text>
</comment>
<comment type="subunit">
    <text evidence="1">Homodimer.</text>
</comment>
<comment type="subcellular location">
    <subcellularLocation>
        <location evidence="1">Cytoplasm</location>
    </subcellularLocation>
</comment>
<comment type="similarity">
    <text evidence="1">Belongs to the triosephosphate isomerase family.</text>
</comment>
<gene>
    <name evidence="1" type="primary">tpiA</name>
    <name type="ordered locus">SAUSA300_0758</name>
</gene>
<dbReference type="EC" id="5.3.1.1" evidence="1"/>
<dbReference type="EMBL" id="CP000255">
    <property type="protein sequence ID" value="ABD22760.1"/>
    <property type="molecule type" value="Genomic_DNA"/>
</dbReference>
<dbReference type="RefSeq" id="WP_001260089.1">
    <property type="nucleotide sequence ID" value="NZ_CP027476.1"/>
</dbReference>
<dbReference type="SMR" id="Q2FIL9"/>
<dbReference type="KEGG" id="saa:SAUSA300_0758"/>
<dbReference type="HOGENOM" id="CLU_024251_2_3_9"/>
<dbReference type="OMA" id="NWKMHMT"/>
<dbReference type="UniPathway" id="UPA00109">
    <property type="reaction ID" value="UER00189"/>
</dbReference>
<dbReference type="UniPathway" id="UPA00138"/>
<dbReference type="Proteomes" id="UP000001939">
    <property type="component" value="Chromosome"/>
</dbReference>
<dbReference type="GO" id="GO:0005829">
    <property type="term" value="C:cytosol"/>
    <property type="evidence" value="ECO:0007669"/>
    <property type="project" value="TreeGrafter"/>
</dbReference>
<dbReference type="GO" id="GO:0004807">
    <property type="term" value="F:triose-phosphate isomerase activity"/>
    <property type="evidence" value="ECO:0007669"/>
    <property type="project" value="UniProtKB-UniRule"/>
</dbReference>
<dbReference type="GO" id="GO:0006094">
    <property type="term" value="P:gluconeogenesis"/>
    <property type="evidence" value="ECO:0007669"/>
    <property type="project" value="UniProtKB-UniRule"/>
</dbReference>
<dbReference type="GO" id="GO:0046166">
    <property type="term" value="P:glyceraldehyde-3-phosphate biosynthetic process"/>
    <property type="evidence" value="ECO:0007669"/>
    <property type="project" value="TreeGrafter"/>
</dbReference>
<dbReference type="GO" id="GO:0019563">
    <property type="term" value="P:glycerol catabolic process"/>
    <property type="evidence" value="ECO:0007669"/>
    <property type="project" value="TreeGrafter"/>
</dbReference>
<dbReference type="GO" id="GO:0006096">
    <property type="term" value="P:glycolytic process"/>
    <property type="evidence" value="ECO:0007669"/>
    <property type="project" value="UniProtKB-UniRule"/>
</dbReference>
<dbReference type="CDD" id="cd00311">
    <property type="entry name" value="TIM"/>
    <property type="match status" value="1"/>
</dbReference>
<dbReference type="FunFam" id="3.20.20.70:FF:000016">
    <property type="entry name" value="Triosephosphate isomerase"/>
    <property type="match status" value="1"/>
</dbReference>
<dbReference type="Gene3D" id="3.20.20.70">
    <property type="entry name" value="Aldolase class I"/>
    <property type="match status" value="1"/>
</dbReference>
<dbReference type="HAMAP" id="MF_00147_B">
    <property type="entry name" value="TIM_B"/>
    <property type="match status" value="1"/>
</dbReference>
<dbReference type="InterPro" id="IPR013785">
    <property type="entry name" value="Aldolase_TIM"/>
</dbReference>
<dbReference type="InterPro" id="IPR035990">
    <property type="entry name" value="TIM_sf"/>
</dbReference>
<dbReference type="InterPro" id="IPR022896">
    <property type="entry name" value="TrioseP_Isoase_bac/euk"/>
</dbReference>
<dbReference type="InterPro" id="IPR000652">
    <property type="entry name" value="Triosephosphate_isomerase"/>
</dbReference>
<dbReference type="InterPro" id="IPR020861">
    <property type="entry name" value="Triosephosphate_isomerase_AS"/>
</dbReference>
<dbReference type="NCBIfam" id="TIGR00419">
    <property type="entry name" value="tim"/>
    <property type="match status" value="1"/>
</dbReference>
<dbReference type="PANTHER" id="PTHR21139">
    <property type="entry name" value="TRIOSEPHOSPHATE ISOMERASE"/>
    <property type="match status" value="1"/>
</dbReference>
<dbReference type="PANTHER" id="PTHR21139:SF42">
    <property type="entry name" value="TRIOSEPHOSPHATE ISOMERASE"/>
    <property type="match status" value="1"/>
</dbReference>
<dbReference type="Pfam" id="PF00121">
    <property type="entry name" value="TIM"/>
    <property type="match status" value="1"/>
</dbReference>
<dbReference type="SUPFAM" id="SSF51351">
    <property type="entry name" value="Triosephosphate isomerase (TIM)"/>
    <property type="match status" value="1"/>
</dbReference>
<dbReference type="PROSITE" id="PS00171">
    <property type="entry name" value="TIM_1"/>
    <property type="match status" value="1"/>
</dbReference>
<dbReference type="PROSITE" id="PS51440">
    <property type="entry name" value="TIM_2"/>
    <property type="match status" value="1"/>
</dbReference>
<name>TPIS_STAA3</name>
<keyword id="KW-0963">Cytoplasm</keyword>
<keyword id="KW-0312">Gluconeogenesis</keyword>
<keyword id="KW-0324">Glycolysis</keyword>
<keyword id="KW-0413">Isomerase</keyword>
<accession>Q2FIL9</accession>